<evidence type="ECO:0000255" key="1">
    <source>
        <dbReference type="HAMAP-Rule" id="MF_01371"/>
    </source>
</evidence>
<evidence type="ECO:0000305" key="2"/>
<dbReference type="EMBL" id="CP000504">
    <property type="protein sequence ID" value="ABL88470.1"/>
    <property type="molecule type" value="Genomic_DNA"/>
</dbReference>
<dbReference type="SMR" id="A1RU38"/>
<dbReference type="STRING" id="384616.Pisl_1307"/>
<dbReference type="KEGG" id="pis:Pisl_1307"/>
<dbReference type="eggNOG" id="arCOG04086">
    <property type="taxonomic scope" value="Archaea"/>
</dbReference>
<dbReference type="HOGENOM" id="CLU_055156_6_0_2"/>
<dbReference type="Proteomes" id="UP000002595">
    <property type="component" value="Chromosome"/>
</dbReference>
<dbReference type="GO" id="GO:0022625">
    <property type="term" value="C:cytosolic large ribosomal subunit"/>
    <property type="evidence" value="ECO:0007669"/>
    <property type="project" value="TreeGrafter"/>
</dbReference>
<dbReference type="GO" id="GO:0003723">
    <property type="term" value="F:RNA binding"/>
    <property type="evidence" value="ECO:0007669"/>
    <property type="project" value="TreeGrafter"/>
</dbReference>
<dbReference type="GO" id="GO:0003735">
    <property type="term" value="F:structural constituent of ribosome"/>
    <property type="evidence" value="ECO:0007669"/>
    <property type="project" value="InterPro"/>
</dbReference>
<dbReference type="GO" id="GO:0000463">
    <property type="term" value="P:maturation of LSU-rRNA from tricistronic rRNA transcript (SSU-rRNA, 5.8S rRNA, LSU-rRNA)"/>
    <property type="evidence" value="ECO:0007669"/>
    <property type="project" value="TreeGrafter"/>
</dbReference>
<dbReference type="GO" id="GO:0006412">
    <property type="term" value="P:translation"/>
    <property type="evidence" value="ECO:0007669"/>
    <property type="project" value="UniProtKB-UniRule"/>
</dbReference>
<dbReference type="CDD" id="cd01657">
    <property type="entry name" value="Ribosomal_L7_archeal_euk"/>
    <property type="match status" value="1"/>
</dbReference>
<dbReference type="FunFam" id="1.10.15.30:FF:000002">
    <property type="entry name" value="50S ribosomal protein L30"/>
    <property type="match status" value="1"/>
</dbReference>
<dbReference type="Gene3D" id="1.10.15.30">
    <property type="match status" value="1"/>
</dbReference>
<dbReference type="Gene3D" id="3.30.1390.20">
    <property type="entry name" value="Ribosomal protein L30, ferredoxin-like fold domain"/>
    <property type="match status" value="1"/>
</dbReference>
<dbReference type="HAMAP" id="MF_01371_A">
    <property type="entry name" value="Ribosomal_uL30_A"/>
    <property type="match status" value="1"/>
</dbReference>
<dbReference type="InterPro" id="IPR036919">
    <property type="entry name" value="Ribo_uL30_ferredoxin-like_sf"/>
</dbReference>
<dbReference type="InterPro" id="IPR039699">
    <property type="entry name" value="Ribosomal_uL30"/>
</dbReference>
<dbReference type="InterPro" id="IPR005997">
    <property type="entry name" value="Ribosomal_uL30_arc"/>
</dbReference>
<dbReference type="InterPro" id="IPR035808">
    <property type="entry name" value="Ribosomal_uL30_euk_arc"/>
</dbReference>
<dbReference type="InterPro" id="IPR016082">
    <property type="entry name" value="Ribosomal_uL30_ferredoxin-like"/>
</dbReference>
<dbReference type="NCBIfam" id="NF004711">
    <property type="entry name" value="PRK06049.1"/>
    <property type="match status" value="1"/>
</dbReference>
<dbReference type="NCBIfam" id="TIGR01309">
    <property type="entry name" value="uL30_arch"/>
    <property type="match status" value="1"/>
</dbReference>
<dbReference type="PANTHER" id="PTHR11524">
    <property type="entry name" value="60S RIBOSOMAL PROTEIN L7"/>
    <property type="match status" value="1"/>
</dbReference>
<dbReference type="PANTHER" id="PTHR11524:SF16">
    <property type="entry name" value="LARGE RIBOSOMAL SUBUNIT PROTEIN UL30"/>
    <property type="match status" value="1"/>
</dbReference>
<dbReference type="Pfam" id="PF00327">
    <property type="entry name" value="Ribosomal_L30"/>
    <property type="match status" value="1"/>
</dbReference>
<dbReference type="SUPFAM" id="SSF55129">
    <property type="entry name" value="Ribosomal protein L30p/L7e"/>
    <property type="match status" value="1"/>
</dbReference>
<reference key="1">
    <citation type="submission" date="2006-12" db="EMBL/GenBank/DDBJ databases">
        <title>Complete sequence of Pyrobaculum islandicum DSM 4184.</title>
        <authorList>
            <person name="Copeland A."/>
            <person name="Lucas S."/>
            <person name="Lapidus A."/>
            <person name="Barry K."/>
            <person name="Detter J.C."/>
            <person name="Glavina del Rio T."/>
            <person name="Dalin E."/>
            <person name="Tice H."/>
            <person name="Pitluck S."/>
            <person name="Meincke L."/>
            <person name="Brettin T."/>
            <person name="Bruce D."/>
            <person name="Han C."/>
            <person name="Tapia R."/>
            <person name="Gilna P."/>
            <person name="Schmutz J."/>
            <person name="Larimer F."/>
            <person name="Land M."/>
            <person name="Hauser L."/>
            <person name="Kyrpides N."/>
            <person name="Mikhailova N."/>
            <person name="Cozen A.E."/>
            <person name="Fitz-Gibbon S.T."/>
            <person name="House C.H."/>
            <person name="Saltikov C."/>
            <person name="Lowe T."/>
            <person name="Richardson P."/>
        </authorList>
    </citation>
    <scope>NUCLEOTIDE SEQUENCE [LARGE SCALE GENOMIC DNA]</scope>
    <source>
        <strain>DSM 4184 / JCM 9189 / GEO3</strain>
    </source>
</reference>
<gene>
    <name evidence="1" type="primary">rpl30</name>
    <name type="ordered locus">Pisl_1307</name>
</gene>
<name>RL30_PYRIL</name>
<sequence length="177" mass="20311">MMETKEKVVYPRYAVIRLRGIPTTPRDIATTLHLLRLRRKFTMVVVPGTPSIIGMIQKVNDWVTWGEIDADTLAEVLKKRGRIVGDKPLTLEYLQKWGWQSFEEVALAYITGEIDSLSCRKVRVREGQRPPCIPYLKPFFRLHPPRGGLNSVKLHFSVGGDLGYRGPLINDLIRRML</sequence>
<keyword id="KW-0687">Ribonucleoprotein</keyword>
<keyword id="KW-0689">Ribosomal protein</keyword>
<proteinExistence type="inferred from homology"/>
<comment type="subunit">
    <text evidence="1">Part of the 50S ribosomal subunit.</text>
</comment>
<comment type="similarity">
    <text evidence="1">Belongs to the universal ribosomal protein uL30 family.</text>
</comment>
<accession>A1RU38</accession>
<protein>
    <recommendedName>
        <fullName evidence="1">Large ribosomal subunit protein uL30</fullName>
    </recommendedName>
    <alternativeName>
        <fullName evidence="2">50S ribosomal protein L30</fullName>
    </alternativeName>
</protein>
<organism>
    <name type="scientific">Pyrobaculum islandicum (strain DSM 4184 / JCM 9189 / GEO3)</name>
    <dbReference type="NCBI Taxonomy" id="384616"/>
    <lineage>
        <taxon>Archaea</taxon>
        <taxon>Thermoproteota</taxon>
        <taxon>Thermoprotei</taxon>
        <taxon>Thermoproteales</taxon>
        <taxon>Thermoproteaceae</taxon>
        <taxon>Pyrobaculum</taxon>
    </lineage>
</organism>
<feature type="chain" id="PRO_0000347173" description="Large ribosomal subunit protein uL30">
    <location>
        <begin position="1"/>
        <end position="177"/>
    </location>
</feature>